<organism>
    <name type="scientific">Halothermothrix orenii (strain H 168 / OCM 544 / DSM 9562)</name>
    <dbReference type="NCBI Taxonomy" id="373903"/>
    <lineage>
        <taxon>Bacteria</taxon>
        <taxon>Bacillati</taxon>
        <taxon>Bacillota</taxon>
        <taxon>Clostridia</taxon>
        <taxon>Halanaerobiales</taxon>
        <taxon>Halothermotrichaceae</taxon>
        <taxon>Halothermothrix</taxon>
    </lineage>
</organism>
<accession>B8CW61</accession>
<feature type="chain" id="PRO_1000124095" description="1-deoxy-D-xylulose 5-phosphate reductoisomerase">
    <location>
        <begin position="1"/>
        <end position="384"/>
    </location>
</feature>
<feature type="binding site" evidence="1">
    <location>
        <position position="11"/>
    </location>
    <ligand>
        <name>NADPH</name>
        <dbReference type="ChEBI" id="CHEBI:57783"/>
    </ligand>
</feature>
<feature type="binding site" evidence="1">
    <location>
        <position position="12"/>
    </location>
    <ligand>
        <name>NADPH</name>
        <dbReference type="ChEBI" id="CHEBI:57783"/>
    </ligand>
</feature>
<feature type="binding site" evidence="1">
    <location>
        <position position="13"/>
    </location>
    <ligand>
        <name>NADPH</name>
        <dbReference type="ChEBI" id="CHEBI:57783"/>
    </ligand>
</feature>
<feature type="binding site" evidence="1">
    <location>
        <position position="14"/>
    </location>
    <ligand>
        <name>NADPH</name>
        <dbReference type="ChEBI" id="CHEBI:57783"/>
    </ligand>
</feature>
<feature type="binding site" evidence="1">
    <location>
        <position position="38"/>
    </location>
    <ligand>
        <name>NADPH</name>
        <dbReference type="ChEBI" id="CHEBI:57783"/>
    </ligand>
</feature>
<feature type="binding site" evidence="1">
    <location>
        <position position="123"/>
    </location>
    <ligand>
        <name>NADPH</name>
        <dbReference type="ChEBI" id="CHEBI:57783"/>
    </ligand>
</feature>
<feature type="binding site" evidence="1">
    <location>
        <position position="124"/>
    </location>
    <ligand>
        <name>1-deoxy-D-xylulose 5-phosphate</name>
        <dbReference type="ChEBI" id="CHEBI:57792"/>
    </ligand>
</feature>
<feature type="binding site" evidence="1">
    <location>
        <position position="125"/>
    </location>
    <ligand>
        <name>NADPH</name>
        <dbReference type="ChEBI" id="CHEBI:57783"/>
    </ligand>
</feature>
<feature type="binding site" evidence="1">
    <location>
        <position position="148"/>
    </location>
    <ligand>
        <name>Mn(2+)</name>
        <dbReference type="ChEBI" id="CHEBI:29035"/>
    </ligand>
</feature>
<feature type="binding site" evidence="1">
    <location>
        <position position="149"/>
    </location>
    <ligand>
        <name>1-deoxy-D-xylulose 5-phosphate</name>
        <dbReference type="ChEBI" id="CHEBI:57792"/>
    </ligand>
</feature>
<feature type="binding site" evidence="1">
    <location>
        <position position="150"/>
    </location>
    <ligand>
        <name>1-deoxy-D-xylulose 5-phosphate</name>
        <dbReference type="ChEBI" id="CHEBI:57792"/>
    </ligand>
</feature>
<feature type="binding site" evidence="1">
    <location>
        <position position="150"/>
    </location>
    <ligand>
        <name>Mn(2+)</name>
        <dbReference type="ChEBI" id="CHEBI:29035"/>
    </ligand>
</feature>
<feature type="binding site" evidence="1">
    <location>
        <position position="174"/>
    </location>
    <ligand>
        <name>1-deoxy-D-xylulose 5-phosphate</name>
        <dbReference type="ChEBI" id="CHEBI:57792"/>
    </ligand>
</feature>
<feature type="binding site" evidence="1">
    <location>
        <position position="197"/>
    </location>
    <ligand>
        <name>1-deoxy-D-xylulose 5-phosphate</name>
        <dbReference type="ChEBI" id="CHEBI:57792"/>
    </ligand>
</feature>
<feature type="binding site" evidence="1">
    <location>
        <position position="203"/>
    </location>
    <ligand>
        <name>NADPH</name>
        <dbReference type="ChEBI" id="CHEBI:57783"/>
    </ligand>
</feature>
<feature type="binding site" evidence="1">
    <location>
        <position position="210"/>
    </location>
    <ligand>
        <name>1-deoxy-D-xylulose 5-phosphate</name>
        <dbReference type="ChEBI" id="CHEBI:57792"/>
    </ligand>
</feature>
<feature type="binding site" evidence="1">
    <location>
        <position position="215"/>
    </location>
    <ligand>
        <name>1-deoxy-D-xylulose 5-phosphate</name>
        <dbReference type="ChEBI" id="CHEBI:57792"/>
    </ligand>
</feature>
<feature type="binding site" evidence="1">
    <location>
        <position position="216"/>
    </location>
    <ligand>
        <name>1-deoxy-D-xylulose 5-phosphate</name>
        <dbReference type="ChEBI" id="CHEBI:57792"/>
    </ligand>
</feature>
<feature type="binding site" evidence="1">
    <location>
        <position position="219"/>
    </location>
    <ligand>
        <name>1-deoxy-D-xylulose 5-phosphate</name>
        <dbReference type="ChEBI" id="CHEBI:57792"/>
    </ligand>
</feature>
<feature type="binding site" evidence="1">
    <location>
        <position position="219"/>
    </location>
    <ligand>
        <name>Mn(2+)</name>
        <dbReference type="ChEBI" id="CHEBI:29035"/>
    </ligand>
</feature>
<sequence length="384" mass="42496">MKKKLVVLGSTGSIGTQTLEVLSHLEDQWEILALSANKSTGLIEKQARKFKPRYLVMMNERAALELKHRLSDMSSEVLSGMEGLITISSLEEADLVINALVGAVGLKPTVAALQSGNTLGLANKESLVIGGEIIKSYLNEEGRVLPVDSEHNAIFQLLNGHNDKEVERLILTASGGPFLELPRERFKDVSVKDALKHPNWDMGGKITIDSATLMNKGLEVIEAHYLFRQPYHNINVVVHPESIIHSMVEFVDKSVIAEMGSADMRMPIQYVLTYPRKVKSLAKRLDLTELGYLTFKKPDTVKFPALKLAYEAGQQGGTMPVVLNAANEIAVSAFMNEKITFDKIPVVIERVMENHQIISSPDLEDVIEVDNWARARAKEVTGQC</sequence>
<name>DXR_HALOH</name>
<keyword id="KW-0414">Isoprene biosynthesis</keyword>
<keyword id="KW-0464">Manganese</keyword>
<keyword id="KW-0479">Metal-binding</keyword>
<keyword id="KW-0521">NADP</keyword>
<keyword id="KW-0560">Oxidoreductase</keyword>
<keyword id="KW-1185">Reference proteome</keyword>
<evidence type="ECO:0000255" key="1">
    <source>
        <dbReference type="HAMAP-Rule" id="MF_00183"/>
    </source>
</evidence>
<proteinExistence type="inferred from homology"/>
<reference key="1">
    <citation type="journal article" date="2009" name="PLoS ONE">
        <title>Genome analysis of the anaerobic thermohalophilic bacterium Halothermothrix orenii.</title>
        <authorList>
            <person name="Mavromatis K."/>
            <person name="Ivanova N."/>
            <person name="Anderson I."/>
            <person name="Lykidis A."/>
            <person name="Hooper S.D."/>
            <person name="Sun H."/>
            <person name="Kunin V."/>
            <person name="Lapidus A."/>
            <person name="Hugenholtz P."/>
            <person name="Patel B."/>
            <person name="Kyrpides N.C."/>
        </authorList>
    </citation>
    <scope>NUCLEOTIDE SEQUENCE [LARGE SCALE GENOMIC DNA]</scope>
    <source>
        <strain>H 168 / OCM 544 / DSM 9562</strain>
    </source>
</reference>
<gene>
    <name evidence="1" type="primary">dxr</name>
    <name type="ordered locus">Hore_07730</name>
</gene>
<dbReference type="EC" id="1.1.1.267" evidence="1"/>
<dbReference type="EMBL" id="CP001098">
    <property type="protein sequence ID" value="ACL69530.1"/>
    <property type="molecule type" value="Genomic_DNA"/>
</dbReference>
<dbReference type="RefSeq" id="WP_012635718.1">
    <property type="nucleotide sequence ID" value="NC_011899.1"/>
</dbReference>
<dbReference type="SMR" id="B8CW61"/>
<dbReference type="STRING" id="373903.Hore_07730"/>
<dbReference type="KEGG" id="hor:Hore_07730"/>
<dbReference type="eggNOG" id="COG0743">
    <property type="taxonomic scope" value="Bacteria"/>
</dbReference>
<dbReference type="HOGENOM" id="CLU_035714_4_0_9"/>
<dbReference type="OrthoDB" id="9806546at2"/>
<dbReference type="UniPathway" id="UPA00056">
    <property type="reaction ID" value="UER00092"/>
</dbReference>
<dbReference type="Proteomes" id="UP000000719">
    <property type="component" value="Chromosome"/>
</dbReference>
<dbReference type="GO" id="GO:0030604">
    <property type="term" value="F:1-deoxy-D-xylulose-5-phosphate reductoisomerase activity"/>
    <property type="evidence" value="ECO:0007669"/>
    <property type="project" value="UniProtKB-UniRule"/>
</dbReference>
<dbReference type="GO" id="GO:0030145">
    <property type="term" value="F:manganese ion binding"/>
    <property type="evidence" value="ECO:0007669"/>
    <property type="project" value="TreeGrafter"/>
</dbReference>
<dbReference type="GO" id="GO:0070402">
    <property type="term" value="F:NADPH binding"/>
    <property type="evidence" value="ECO:0007669"/>
    <property type="project" value="InterPro"/>
</dbReference>
<dbReference type="GO" id="GO:0051484">
    <property type="term" value="P:isopentenyl diphosphate biosynthetic process, methylerythritol 4-phosphate pathway involved in terpenoid biosynthetic process"/>
    <property type="evidence" value="ECO:0007669"/>
    <property type="project" value="TreeGrafter"/>
</dbReference>
<dbReference type="FunFam" id="3.40.50.720:FF:000045">
    <property type="entry name" value="1-deoxy-D-xylulose 5-phosphate reductoisomerase"/>
    <property type="match status" value="1"/>
</dbReference>
<dbReference type="Gene3D" id="1.10.1740.10">
    <property type="match status" value="1"/>
</dbReference>
<dbReference type="Gene3D" id="3.40.50.720">
    <property type="entry name" value="NAD(P)-binding Rossmann-like Domain"/>
    <property type="match status" value="1"/>
</dbReference>
<dbReference type="HAMAP" id="MF_00183">
    <property type="entry name" value="DXP_reductoisom"/>
    <property type="match status" value="1"/>
</dbReference>
<dbReference type="InterPro" id="IPR003821">
    <property type="entry name" value="DXP_reductoisomerase"/>
</dbReference>
<dbReference type="InterPro" id="IPR013644">
    <property type="entry name" value="DXP_reductoisomerase_C"/>
</dbReference>
<dbReference type="InterPro" id="IPR013512">
    <property type="entry name" value="DXP_reductoisomerase_N"/>
</dbReference>
<dbReference type="InterPro" id="IPR026877">
    <property type="entry name" value="DXPR_C"/>
</dbReference>
<dbReference type="InterPro" id="IPR036169">
    <property type="entry name" value="DXPR_C_sf"/>
</dbReference>
<dbReference type="InterPro" id="IPR036291">
    <property type="entry name" value="NAD(P)-bd_dom_sf"/>
</dbReference>
<dbReference type="NCBIfam" id="TIGR00243">
    <property type="entry name" value="Dxr"/>
    <property type="match status" value="1"/>
</dbReference>
<dbReference type="NCBIfam" id="NF009114">
    <property type="entry name" value="PRK12464.1"/>
    <property type="match status" value="1"/>
</dbReference>
<dbReference type="PANTHER" id="PTHR30525">
    <property type="entry name" value="1-DEOXY-D-XYLULOSE 5-PHOSPHATE REDUCTOISOMERASE"/>
    <property type="match status" value="1"/>
</dbReference>
<dbReference type="PANTHER" id="PTHR30525:SF0">
    <property type="entry name" value="1-DEOXY-D-XYLULOSE 5-PHOSPHATE REDUCTOISOMERASE, CHLOROPLASTIC"/>
    <property type="match status" value="1"/>
</dbReference>
<dbReference type="Pfam" id="PF08436">
    <property type="entry name" value="DXP_redisom_C"/>
    <property type="match status" value="1"/>
</dbReference>
<dbReference type="Pfam" id="PF02670">
    <property type="entry name" value="DXP_reductoisom"/>
    <property type="match status" value="1"/>
</dbReference>
<dbReference type="Pfam" id="PF13288">
    <property type="entry name" value="DXPR_C"/>
    <property type="match status" value="1"/>
</dbReference>
<dbReference type="PIRSF" id="PIRSF006205">
    <property type="entry name" value="Dxp_reductismrs"/>
    <property type="match status" value="1"/>
</dbReference>
<dbReference type="SUPFAM" id="SSF69055">
    <property type="entry name" value="1-deoxy-D-xylulose-5-phosphate reductoisomerase, C-terminal domain"/>
    <property type="match status" value="1"/>
</dbReference>
<dbReference type="SUPFAM" id="SSF55347">
    <property type="entry name" value="Glyceraldehyde-3-phosphate dehydrogenase-like, C-terminal domain"/>
    <property type="match status" value="1"/>
</dbReference>
<dbReference type="SUPFAM" id="SSF51735">
    <property type="entry name" value="NAD(P)-binding Rossmann-fold domains"/>
    <property type="match status" value="1"/>
</dbReference>
<comment type="function">
    <text evidence="1">Catalyzes the NADPH-dependent rearrangement and reduction of 1-deoxy-D-xylulose-5-phosphate (DXP) to 2-C-methyl-D-erythritol 4-phosphate (MEP).</text>
</comment>
<comment type="catalytic activity">
    <reaction evidence="1">
        <text>2-C-methyl-D-erythritol 4-phosphate + NADP(+) = 1-deoxy-D-xylulose 5-phosphate + NADPH + H(+)</text>
        <dbReference type="Rhea" id="RHEA:13717"/>
        <dbReference type="ChEBI" id="CHEBI:15378"/>
        <dbReference type="ChEBI" id="CHEBI:57783"/>
        <dbReference type="ChEBI" id="CHEBI:57792"/>
        <dbReference type="ChEBI" id="CHEBI:58262"/>
        <dbReference type="ChEBI" id="CHEBI:58349"/>
        <dbReference type="EC" id="1.1.1.267"/>
    </reaction>
    <physiologicalReaction direction="right-to-left" evidence="1">
        <dbReference type="Rhea" id="RHEA:13719"/>
    </physiologicalReaction>
</comment>
<comment type="cofactor">
    <cofactor evidence="1">
        <name>Mg(2+)</name>
        <dbReference type="ChEBI" id="CHEBI:18420"/>
    </cofactor>
    <cofactor evidence="1">
        <name>Mn(2+)</name>
        <dbReference type="ChEBI" id="CHEBI:29035"/>
    </cofactor>
</comment>
<comment type="pathway">
    <text evidence="1">Isoprenoid biosynthesis; isopentenyl diphosphate biosynthesis via DXP pathway; isopentenyl diphosphate from 1-deoxy-D-xylulose 5-phosphate: step 1/6.</text>
</comment>
<comment type="similarity">
    <text evidence="1">Belongs to the DXR family.</text>
</comment>
<protein>
    <recommendedName>
        <fullName evidence="1">1-deoxy-D-xylulose 5-phosphate reductoisomerase</fullName>
        <shortName evidence="1">DXP reductoisomerase</shortName>
        <ecNumber evidence="1">1.1.1.267</ecNumber>
    </recommendedName>
    <alternativeName>
        <fullName evidence="1">1-deoxyxylulose-5-phosphate reductoisomerase</fullName>
    </alternativeName>
    <alternativeName>
        <fullName evidence="1">2-C-methyl-D-erythritol 4-phosphate synthase</fullName>
    </alternativeName>
</protein>